<dbReference type="EMBL" id="CP001402">
    <property type="protein sequence ID" value="ACR42322.1"/>
    <property type="molecule type" value="Genomic_DNA"/>
</dbReference>
<dbReference type="RefSeq" id="WP_012736044.1">
    <property type="nucleotide sequence ID" value="NC_012726.1"/>
</dbReference>
<dbReference type="SMR" id="C4KIA8"/>
<dbReference type="GeneID" id="84062027"/>
<dbReference type="KEGG" id="sid:M164_1718"/>
<dbReference type="HOGENOM" id="CLU_107248_3_2_2"/>
<dbReference type="Proteomes" id="UP000001479">
    <property type="component" value="Chromosome"/>
</dbReference>
<dbReference type="GO" id="GO:1990904">
    <property type="term" value="C:ribonucleoprotein complex"/>
    <property type="evidence" value="ECO:0007669"/>
    <property type="project" value="UniProtKB-KW"/>
</dbReference>
<dbReference type="GO" id="GO:0005840">
    <property type="term" value="C:ribosome"/>
    <property type="evidence" value="ECO:0007669"/>
    <property type="project" value="UniProtKB-KW"/>
</dbReference>
<dbReference type="GO" id="GO:0003735">
    <property type="term" value="F:structural constituent of ribosome"/>
    <property type="evidence" value="ECO:0007669"/>
    <property type="project" value="InterPro"/>
</dbReference>
<dbReference type="GO" id="GO:0006412">
    <property type="term" value="P:translation"/>
    <property type="evidence" value="ECO:0007669"/>
    <property type="project" value="UniProtKB-UniRule"/>
</dbReference>
<dbReference type="Gene3D" id="3.30.70.3370">
    <property type="match status" value="1"/>
</dbReference>
<dbReference type="HAMAP" id="MF_00545">
    <property type="entry name" value="Ribosomal_eS24"/>
    <property type="match status" value="1"/>
</dbReference>
<dbReference type="InterPro" id="IPR053709">
    <property type="entry name" value="eRP_eS24_sf"/>
</dbReference>
<dbReference type="InterPro" id="IPR001976">
    <property type="entry name" value="Ribosomal_eS24"/>
</dbReference>
<dbReference type="InterPro" id="IPR018098">
    <property type="entry name" value="Ribosomal_eS24_CS"/>
</dbReference>
<dbReference type="InterPro" id="IPR012678">
    <property type="entry name" value="Ribosomal_uL23/eL15/eS24_sf"/>
</dbReference>
<dbReference type="PANTHER" id="PTHR10496">
    <property type="entry name" value="40S RIBOSOMAL PROTEIN S24"/>
    <property type="match status" value="1"/>
</dbReference>
<dbReference type="Pfam" id="PF01282">
    <property type="entry name" value="Ribosomal_S24e"/>
    <property type="match status" value="1"/>
</dbReference>
<dbReference type="SUPFAM" id="SSF54189">
    <property type="entry name" value="Ribosomal proteins S24e, L23 and L15e"/>
    <property type="match status" value="1"/>
</dbReference>
<dbReference type="PROSITE" id="PS00529">
    <property type="entry name" value="RIBOSOMAL_S24E"/>
    <property type="match status" value="1"/>
</dbReference>
<comment type="similarity">
    <text evidence="1">Belongs to the eukaryotic ribosomal protein eS24 family.</text>
</comment>
<feature type="chain" id="PRO_1000211960" description="Small ribosomal subunit protein eS24">
    <location>
        <begin position="1"/>
        <end position="120"/>
    </location>
</feature>
<feature type="region of interest" description="Disordered" evidence="2">
    <location>
        <begin position="101"/>
        <end position="120"/>
    </location>
</feature>
<proteinExistence type="inferred from homology"/>
<reference key="1">
    <citation type="journal article" date="2009" name="Proc. Natl. Acad. Sci. U.S.A.">
        <title>Biogeography of the Sulfolobus islandicus pan-genome.</title>
        <authorList>
            <person name="Reno M.L."/>
            <person name="Held N.L."/>
            <person name="Fields C.J."/>
            <person name="Burke P.V."/>
            <person name="Whitaker R.J."/>
        </authorList>
    </citation>
    <scope>NUCLEOTIDE SEQUENCE [LARGE SCALE GENOMIC DNA]</scope>
    <source>
        <strain>M.16.4 / Kamchatka #3</strain>
    </source>
</reference>
<organism>
    <name type="scientific">Saccharolobus islandicus (strain M.16.4 / Kamchatka #3)</name>
    <name type="common">Sulfolobus islandicus</name>
    <dbReference type="NCBI Taxonomy" id="426118"/>
    <lineage>
        <taxon>Archaea</taxon>
        <taxon>Thermoproteota</taxon>
        <taxon>Thermoprotei</taxon>
        <taxon>Sulfolobales</taxon>
        <taxon>Sulfolobaceae</taxon>
        <taxon>Saccharolobus</taxon>
    </lineage>
</organism>
<sequence>MESQAKVKISDKAEGIIERDVQNAVIGRREILLKVYHMGSGTPSRKDIIKAISQAFASQENLVVVRKISTSYGAGISNVKLHIYKSREILEKIEPKYLLDRDAGTKQKKGGSKGGQGAKG</sequence>
<protein>
    <recommendedName>
        <fullName evidence="1">Small ribosomal subunit protein eS24</fullName>
    </recommendedName>
    <alternativeName>
        <fullName evidence="3">30S ribosomal protein S24e</fullName>
    </alternativeName>
</protein>
<evidence type="ECO:0000255" key="1">
    <source>
        <dbReference type="HAMAP-Rule" id="MF_00545"/>
    </source>
</evidence>
<evidence type="ECO:0000256" key="2">
    <source>
        <dbReference type="SAM" id="MobiDB-lite"/>
    </source>
</evidence>
<evidence type="ECO:0000305" key="3"/>
<accession>C4KIA8</accession>
<gene>
    <name evidence="1" type="primary">rps24e</name>
    <name type="ordered locus">M164_1718</name>
</gene>
<keyword id="KW-0687">Ribonucleoprotein</keyword>
<keyword id="KW-0689">Ribosomal protein</keyword>
<name>RS24_SACI6</name>